<dbReference type="EMBL" id="CP001124">
    <property type="protein sequence ID" value="ACH37940.1"/>
    <property type="molecule type" value="Genomic_DNA"/>
</dbReference>
<dbReference type="RefSeq" id="WP_012529352.1">
    <property type="nucleotide sequence ID" value="NC_011146.1"/>
</dbReference>
<dbReference type="SMR" id="B5EFN6"/>
<dbReference type="STRING" id="404380.Gbem_0919"/>
<dbReference type="KEGG" id="gbm:Gbem_0919"/>
<dbReference type="eggNOG" id="COG0267">
    <property type="taxonomic scope" value="Bacteria"/>
</dbReference>
<dbReference type="HOGENOM" id="CLU_190949_0_2_7"/>
<dbReference type="Proteomes" id="UP000008825">
    <property type="component" value="Chromosome"/>
</dbReference>
<dbReference type="GO" id="GO:0005737">
    <property type="term" value="C:cytoplasm"/>
    <property type="evidence" value="ECO:0007669"/>
    <property type="project" value="UniProtKB-ARBA"/>
</dbReference>
<dbReference type="GO" id="GO:1990904">
    <property type="term" value="C:ribonucleoprotein complex"/>
    <property type="evidence" value="ECO:0007669"/>
    <property type="project" value="UniProtKB-KW"/>
</dbReference>
<dbReference type="GO" id="GO:0005840">
    <property type="term" value="C:ribosome"/>
    <property type="evidence" value="ECO:0007669"/>
    <property type="project" value="UniProtKB-KW"/>
</dbReference>
<dbReference type="GO" id="GO:0003735">
    <property type="term" value="F:structural constituent of ribosome"/>
    <property type="evidence" value="ECO:0007669"/>
    <property type="project" value="InterPro"/>
</dbReference>
<dbReference type="GO" id="GO:0006412">
    <property type="term" value="P:translation"/>
    <property type="evidence" value="ECO:0007669"/>
    <property type="project" value="UniProtKB-UniRule"/>
</dbReference>
<dbReference type="Gene3D" id="2.20.28.120">
    <property type="entry name" value="Ribosomal protein L33"/>
    <property type="match status" value="1"/>
</dbReference>
<dbReference type="HAMAP" id="MF_00294">
    <property type="entry name" value="Ribosomal_bL33"/>
    <property type="match status" value="1"/>
</dbReference>
<dbReference type="InterPro" id="IPR001705">
    <property type="entry name" value="Ribosomal_bL33"/>
</dbReference>
<dbReference type="InterPro" id="IPR018264">
    <property type="entry name" value="Ribosomal_bL33_CS"/>
</dbReference>
<dbReference type="InterPro" id="IPR038584">
    <property type="entry name" value="Ribosomal_bL33_sf"/>
</dbReference>
<dbReference type="InterPro" id="IPR011332">
    <property type="entry name" value="Ribosomal_zn-bd"/>
</dbReference>
<dbReference type="NCBIfam" id="NF001764">
    <property type="entry name" value="PRK00504.1"/>
    <property type="match status" value="1"/>
</dbReference>
<dbReference type="NCBIfam" id="NF001860">
    <property type="entry name" value="PRK00595.1"/>
    <property type="match status" value="1"/>
</dbReference>
<dbReference type="NCBIfam" id="TIGR01023">
    <property type="entry name" value="rpmG_bact"/>
    <property type="match status" value="1"/>
</dbReference>
<dbReference type="PANTHER" id="PTHR43168">
    <property type="entry name" value="50S RIBOSOMAL PROTEIN L33, CHLOROPLASTIC"/>
    <property type="match status" value="1"/>
</dbReference>
<dbReference type="PANTHER" id="PTHR43168:SF2">
    <property type="entry name" value="LARGE RIBOSOMAL SUBUNIT PROTEIN BL33C"/>
    <property type="match status" value="1"/>
</dbReference>
<dbReference type="Pfam" id="PF00471">
    <property type="entry name" value="Ribosomal_L33"/>
    <property type="match status" value="1"/>
</dbReference>
<dbReference type="SUPFAM" id="SSF57829">
    <property type="entry name" value="Zn-binding ribosomal proteins"/>
    <property type="match status" value="1"/>
</dbReference>
<dbReference type="PROSITE" id="PS00582">
    <property type="entry name" value="RIBOSOMAL_L33"/>
    <property type="match status" value="1"/>
</dbReference>
<comment type="similarity">
    <text evidence="1">Belongs to the bacterial ribosomal protein bL33 family.</text>
</comment>
<keyword id="KW-1185">Reference proteome</keyword>
<keyword id="KW-0687">Ribonucleoprotein</keyword>
<keyword id="KW-0689">Ribosomal protein</keyword>
<sequence>MPRDIITLGCTECKQRNYTTTKNKKNTPQKLEFNKYCRFCQKHTLHKETK</sequence>
<reference key="1">
    <citation type="submission" date="2008-07" db="EMBL/GenBank/DDBJ databases">
        <title>Complete sequence of Geobacter bemidjiensis BEM.</title>
        <authorList>
            <consortium name="US DOE Joint Genome Institute"/>
            <person name="Lucas S."/>
            <person name="Copeland A."/>
            <person name="Lapidus A."/>
            <person name="Glavina del Rio T."/>
            <person name="Dalin E."/>
            <person name="Tice H."/>
            <person name="Bruce D."/>
            <person name="Goodwin L."/>
            <person name="Pitluck S."/>
            <person name="Kiss H."/>
            <person name="Brettin T."/>
            <person name="Detter J.C."/>
            <person name="Han C."/>
            <person name="Kuske C.R."/>
            <person name="Schmutz J."/>
            <person name="Larimer F."/>
            <person name="Land M."/>
            <person name="Hauser L."/>
            <person name="Kyrpides N."/>
            <person name="Lykidis A."/>
            <person name="Lovley D."/>
            <person name="Richardson P."/>
        </authorList>
    </citation>
    <scope>NUCLEOTIDE SEQUENCE [LARGE SCALE GENOMIC DNA]</scope>
    <source>
        <strain>ATCC BAA-1014 / DSM 16622 / JCM 12645 / Bem</strain>
    </source>
</reference>
<feature type="chain" id="PRO_0000356474" description="Large ribosomal subunit protein bL33">
    <location>
        <begin position="1"/>
        <end position="50"/>
    </location>
</feature>
<gene>
    <name evidence="1" type="primary">rpmG</name>
    <name type="ordered locus">Gbem_0919</name>
</gene>
<organism>
    <name type="scientific">Citrifermentans bemidjiense (strain ATCC BAA-1014 / DSM 16622 / JCM 12645 / Bem)</name>
    <name type="common">Geobacter bemidjiensis</name>
    <dbReference type="NCBI Taxonomy" id="404380"/>
    <lineage>
        <taxon>Bacteria</taxon>
        <taxon>Pseudomonadati</taxon>
        <taxon>Thermodesulfobacteriota</taxon>
        <taxon>Desulfuromonadia</taxon>
        <taxon>Geobacterales</taxon>
        <taxon>Geobacteraceae</taxon>
        <taxon>Citrifermentans</taxon>
    </lineage>
</organism>
<accession>B5EFN6</accession>
<protein>
    <recommendedName>
        <fullName evidence="1">Large ribosomal subunit protein bL33</fullName>
    </recommendedName>
    <alternativeName>
        <fullName evidence="2">50S ribosomal protein L33</fullName>
    </alternativeName>
</protein>
<evidence type="ECO:0000255" key="1">
    <source>
        <dbReference type="HAMAP-Rule" id="MF_00294"/>
    </source>
</evidence>
<evidence type="ECO:0000305" key="2"/>
<proteinExistence type="inferred from homology"/>
<name>RL33_CITBB</name>